<feature type="chain" id="PRO_0000271250" description="Transcription factor LBX1">
    <location>
        <begin position="1"/>
        <end position="267"/>
    </location>
</feature>
<feature type="DNA-binding region" description="Homeobox" evidence="1">
    <location>
        <begin position="127"/>
        <end position="186"/>
    </location>
</feature>
<feature type="region of interest" description="Disordered" evidence="2">
    <location>
        <begin position="1"/>
        <end position="36"/>
    </location>
</feature>
<feature type="region of interest" description="Disordered" evidence="2">
    <location>
        <begin position="211"/>
        <end position="267"/>
    </location>
</feature>
<feature type="compositionally biased region" description="Basic and acidic residues" evidence="2">
    <location>
        <begin position="1"/>
        <end position="21"/>
    </location>
</feature>
<feature type="compositionally biased region" description="Polar residues" evidence="2">
    <location>
        <begin position="228"/>
        <end position="237"/>
    </location>
</feature>
<feature type="compositionally biased region" description="Acidic residues" evidence="2">
    <location>
        <begin position="255"/>
        <end position="267"/>
    </location>
</feature>
<dbReference type="EMBL" id="DQ294722">
    <property type="protein sequence ID" value="ABC49635.1"/>
    <property type="molecule type" value="mRNA"/>
</dbReference>
<dbReference type="KEGG" id="xla:734237"/>
<dbReference type="AGR" id="Xenbase:XB-GENE-6251676"/>
<dbReference type="CTD" id="734237"/>
<dbReference type="Xenbase" id="XB-GENE-6251676">
    <property type="gene designation" value="lbx1.L"/>
</dbReference>
<dbReference type="OrthoDB" id="6159439at2759"/>
<dbReference type="Proteomes" id="UP000186698">
    <property type="component" value="Chromosome 7L"/>
</dbReference>
<dbReference type="Bgee" id="734237">
    <property type="expression patterns" value="Expressed in muscle tissue and 3 other cell types or tissues"/>
</dbReference>
<dbReference type="GO" id="GO:0005634">
    <property type="term" value="C:nucleus"/>
    <property type="evidence" value="ECO:0000318"/>
    <property type="project" value="GO_Central"/>
</dbReference>
<dbReference type="GO" id="GO:0005667">
    <property type="term" value="C:transcription regulator complex"/>
    <property type="evidence" value="ECO:0000250"/>
    <property type="project" value="UniProtKB"/>
</dbReference>
<dbReference type="GO" id="GO:0003700">
    <property type="term" value="F:DNA-binding transcription factor activity"/>
    <property type="evidence" value="ECO:0000250"/>
    <property type="project" value="UniProtKB"/>
</dbReference>
<dbReference type="GO" id="GO:0000981">
    <property type="term" value="F:DNA-binding transcription factor activity, RNA polymerase II-specific"/>
    <property type="evidence" value="ECO:0000318"/>
    <property type="project" value="GO_Central"/>
</dbReference>
<dbReference type="GO" id="GO:1990837">
    <property type="term" value="F:sequence-specific double-stranded DNA binding"/>
    <property type="evidence" value="ECO:0000318"/>
    <property type="project" value="GO_Central"/>
</dbReference>
<dbReference type="GO" id="GO:0030154">
    <property type="term" value="P:cell differentiation"/>
    <property type="evidence" value="ECO:0007669"/>
    <property type="project" value="UniProtKB-KW"/>
</dbReference>
<dbReference type="GO" id="GO:0007517">
    <property type="term" value="P:muscle organ development"/>
    <property type="evidence" value="ECO:0000315"/>
    <property type="project" value="UniProtKB"/>
</dbReference>
<dbReference type="GO" id="GO:0051450">
    <property type="term" value="P:myoblast proliferation"/>
    <property type="evidence" value="ECO:0000315"/>
    <property type="project" value="UniProtKB"/>
</dbReference>
<dbReference type="GO" id="GO:0000122">
    <property type="term" value="P:negative regulation of transcription by RNA polymerase II"/>
    <property type="evidence" value="ECO:0000315"/>
    <property type="project" value="UniProtKB"/>
</dbReference>
<dbReference type="GO" id="GO:0006355">
    <property type="term" value="P:regulation of DNA-templated transcription"/>
    <property type="evidence" value="ECO:0000250"/>
    <property type="project" value="UniProtKB"/>
</dbReference>
<dbReference type="GO" id="GO:0006357">
    <property type="term" value="P:regulation of transcription by RNA polymerase II"/>
    <property type="evidence" value="ECO:0000318"/>
    <property type="project" value="GO_Central"/>
</dbReference>
<dbReference type="CDD" id="cd00086">
    <property type="entry name" value="homeodomain"/>
    <property type="match status" value="1"/>
</dbReference>
<dbReference type="FunFam" id="1.10.10.60:FF:000098">
    <property type="entry name" value="Transcription factor LBX1"/>
    <property type="match status" value="1"/>
</dbReference>
<dbReference type="Gene3D" id="1.10.10.60">
    <property type="entry name" value="Homeodomain-like"/>
    <property type="match status" value="1"/>
</dbReference>
<dbReference type="InterPro" id="IPR001356">
    <property type="entry name" value="HD"/>
</dbReference>
<dbReference type="InterPro" id="IPR017970">
    <property type="entry name" value="Homeobox_CS"/>
</dbReference>
<dbReference type="InterPro" id="IPR009057">
    <property type="entry name" value="Homeodomain-like_sf"/>
</dbReference>
<dbReference type="InterPro" id="IPR000047">
    <property type="entry name" value="HTH_motif"/>
</dbReference>
<dbReference type="InterPro" id="IPR051892">
    <property type="entry name" value="LBX_TF"/>
</dbReference>
<dbReference type="PANTHER" id="PTHR24336">
    <property type="entry name" value="TRANSCRIPTION FACTOR LBX"/>
    <property type="match status" value="1"/>
</dbReference>
<dbReference type="PANTHER" id="PTHR24336:SF9">
    <property type="entry name" value="TRANSCRIPTION FACTOR LBX1"/>
    <property type="match status" value="1"/>
</dbReference>
<dbReference type="Pfam" id="PF00046">
    <property type="entry name" value="Homeodomain"/>
    <property type="match status" value="1"/>
</dbReference>
<dbReference type="PRINTS" id="PR00031">
    <property type="entry name" value="HTHREPRESSR"/>
</dbReference>
<dbReference type="SMART" id="SM00389">
    <property type="entry name" value="HOX"/>
    <property type="match status" value="1"/>
</dbReference>
<dbReference type="SUPFAM" id="SSF46689">
    <property type="entry name" value="Homeodomain-like"/>
    <property type="match status" value="1"/>
</dbReference>
<dbReference type="PROSITE" id="PS00027">
    <property type="entry name" value="HOMEOBOX_1"/>
    <property type="match status" value="1"/>
</dbReference>
<dbReference type="PROSITE" id="PS50071">
    <property type="entry name" value="HOMEOBOX_2"/>
    <property type="match status" value="1"/>
</dbReference>
<gene>
    <name evidence="5" type="primary">lbx1</name>
</gene>
<keyword id="KW-0217">Developmental protein</keyword>
<keyword id="KW-0221">Differentiation</keyword>
<keyword id="KW-0238">DNA-binding</keyword>
<keyword id="KW-0371">Homeobox</keyword>
<keyword id="KW-0517">Myogenesis</keyword>
<keyword id="KW-0539">Nucleus</keyword>
<keyword id="KW-1185">Reference proteome</keyword>
<keyword id="KW-0804">Transcription</keyword>
<keyword id="KW-0805">Transcription regulation</keyword>
<reference evidence="4 5" key="1">
    <citation type="journal article" date="2006" name="Development">
        <title>A novel role for lbx1 in Xenopus hypaxial myogenesis.</title>
        <authorList>
            <person name="Martin B.L."/>
            <person name="Harland R.M."/>
        </authorList>
    </citation>
    <scope>NUCLEOTIDE SEQUENCE [MRNA]</scope>
    <scope>FUNCTION</scope>
    <scope>TISSUE SPECIFICITY</scope>
</reference>
<name>LBX1_XENLA</name>
<proteinExistence type="evidence at transcript level"/>
<accession>Q2PYN8</accession>
<organism>
    <name type="scientific">Xenopus laevis</name>
    <name type="common">African clawed frog</name>
    <dbReference type="NCBI Taxonomy" id="8355"/>
    <lineage>
        <taxon>Eukaryota</taxon>
        <taxon>Metazoa</taxon>
        <taxon>Chordata</taxon>
        <taxon>Craniata</taxon>
        <taxon>Vertebrata</taxon>
        <taxon>Euteleostomi</taxon>
        <taxon>Amphibia</taxon>
        <taxon>Batrachia</taxon>
        <taxon>Anura</taxon>
        <taxon>Pipoidea</taxon>
        <taxon>Pipidae</taxon>
        <taxon>Xenopodinae</taxon>
        <taxon>Xenopus</taxon>
        <taxon>Xenopus</taxon>
    </lineage>
</organism>
<evidence type="ECO:0000255" key="1">
    <source>
        <dbReference type="PROSITE-ProRule" id="PRU00108"/>
    </source>
</evidence>
<evidence type="ECO:0000256" key="2">
    <source>
        <dbReference type="SAM" id="MobiDB-lite"/>
    </source>
</evidence>
<evidence type="ECO:0000269" key="3">
    <source>
    </source>
</evidence>
<evidence type="ECO:0000305" key="4"/>
<evidence type="ECO:0000312" key="5">
    <source>
        <dbReference type="EMBL" id="ABC49635.1"/>
    </source>
</evidence>
<protein>
    <recommendedName>
        <fullName>Transcription factor LBX1</fullName>
    </recommendedName>
    <alternativeName>
        <fullName>Ladybird homeobox protein homolog 1</fullName>
    </alternativeName>
</protein>
<sequence>MTSKDEAKSSASSVEERRRNALDLLPPPANSNKPLTPFSIEDILNKPSVRRSYTICGTAHLLSSADKPPAAGLPLSSRALLSQTSPLCALEELASKTFKGLEVSVLQAAEGRDGMTIFGQRQTPKKRRKSRTAFTNHQIYELEKRFLYQKYLSPADRDQIAQQLGLTNAQVITWFQNRRAKLKRDLEEMKADVESTKKMSPSAVEAVLTISELEESGSERGNSRSRSPQLGLTSNHMPLSPSXPLTDQHASKECSEDEEDVEIDVDD</sequence>
<comment type="function">
    <text evidence="3">Transcription factor that controls hypaxial muscle development by down-regulating myod1 and cdkn1b/p27, thereby allowing myoblasts to proliferate before the onset of terminal differentiation.</text>
</comment>
<comment type="subcellular location">
    <subcellularLocation>
        <location evidence="4">Nucleus</location>
    </subcellularLocation>
</comment>
<comment type="tissue specificity">
    <text evidence="3">Expressed in all myoblasts that will populate body wall muscles as well as in a group of cells the migrate into the head.</text>
</comment>